<dbReference type="EC" id="1.10.3.9" evidence="2"/>
<dbReference type="EMBL" id="EU431223">
    <property type="protein sequence ID" value="ABY86777.1"/>
    <property type="molecule type" value="Genomic_DNA"/>
</dbReference>
<dbReference type="RefSeq" id="YP_001671678.1">
    <property type="nucleotide sequence ID" value="NC_010323.1"/>
</dbReference>
<dbReference type="SMR" id="B1A930"/>
<dbReference type="GeneID" id="5878373"/>
<dbReference type="KEGG" id="cpap:5878373"/>
<dbReference type="OrthoDB" id="1034903at2759"/>
<dbReference type="GO" id="GO:0009535">
    <property type="term" value="C:chloroplast thylakoid membrane"/>
    <property type="evidence" value="ECO:0007669"/>
    <property type="project" value="UniProtKB-SubCell"/>
</dbReference>
<dbReference type="GO" id="GO:0009523">
    <property type="term" value="C:photosystem II"/>
    <property type="evidence" value="ECO:0007669"/>
    <property type="project" value="UniProtKB-KW"/>
</dbReference>
<dbReference type="GO" id="GO:0016168">
    <property type="term" value="F:chlorophyll binding"/>
    <property type="evidence" value="ECO:0007669"/>
    <property type="project" value="UniProtKB-UniRule"/>
</dbReference>
<dbReference type="GO" id="GO:0045156">
    <property type="term" value="F:electron transporter, transferring electrons within the cyclic electron transport pathway of photosynthesis activity"/>
    <property type="evidence" value="ECO:0007669"/>
    <property type="project" value="InterPro"/>
</dbReference>
<dbReference type="GO" id="GO:0005506">
    <property type="term" value="F:iron ion binding"/>
    <property type="evidence" value="ECO:0007669"/>
    <property type="project" value="UniProtKB-UniRule"/>
</dbReference>
<dbReference type="GO" id="GO:0010242">
    <property type="term" value="F:oxygen evolving activity"/>
    <property type="evidence" value="ECO:0007669"/>
    <property type="project" value="UniProtKB-EC"/>
</dbReference>
<dbReference type="GO" id="GO:0009772">
    <property type="term" value="P:photosynthetic electron transport in photosystem II"/>
    <property type="evidence" value="ECO:0007669"/>
    <property type="project" value="InterPro"/>
</dbReference>
<dbReference type="CDD" id="cd09288">
    <property type="entry name" value="Photosystem-II_D2"/>
    <property type="match status" value="1"/>
</dbReference>
<dbReference type="FunFam" id="1.20.85.10:FF:000001">
    <property type="entry name" value="photosystem II D2 protein-like"/>
    <property type="match status" value="1"/>
</dbReference>
<dbReference type="Gene3D" id="1.20.85.10">
    <property type="entry name" value="Photosystem II protein D1-like"/>
    <property type="match status" value="1"/>
</dbReference>
<dbReference type="HAMAP" id="MF_01383">
    <property type="entry name" value="PSII_PsbD_D2"/>
    <property type="match status" value="1"/>
</dbReference>
<dbReference type="InterPro" id="IPR055266">
    <property type="entry name" value="D1/D2"/>
</dbReference>
<dbReference type="InterPro" id="IPR036854">
    <property type="entry name" value="Photo_II_D1/D2_sf"/>
</dbReference>
<dbReference type="InterPro" id="IPR000484">
    <property type="entry name" value="Photo_RC_L/M"/>
</dbReference>
<dbReference type="InterPro" id="IPR055265">
    <property type="entry name" value="Photo_RC_L/M_CS"/>
</dbReference>
<dbReference type="InterPro" id="IPR005868">
    <property type="entry name" value="PSII_PsbD/D2"/>
</dbReference>
<dbReference type="NCBIfam" id="TIGR01152">
    <property type="entry name" value="psbD"/>
    <property type="match status" value="1"/>
</dbReference>
<dbReference type="PANTHER" id="PTHR33149:SF12">
    <property type="entry name" value="PHOTOSYSTEM II D2 PROTEIN"/>
    <property type="match status" value="1"/>
</dbReference>
<dbReference type="PANTHER" id="PTHR33149">
    <property type="entry name" value="PHOTOSYSTEM II PROTEIN D1"/>
    <property type="match status" value="1"/>
</dbReference>
<dbReference type="Pfam" id="PF00124">
    <property type="entry name" value="Photo_RC"/>
    <property type="match status" value="1"/>
</dbReference>
<dbReference type="PRINTS" id="PR00256">
    <property type="entry name" value="REACTNCENTRE"/>
</dbReference>
<dbReference type="SUPFAM" id="SSF81483">
    <property type="entry name" value="Bacterial photosystem II reaction centre, L and M subunits"/>
    <property type="match status" value="1"/>
</dbReference>
<dbReference type="PROSITE" id="PS00244">
    <property type="entry name" value="REACTION_CENTER"/>
    <property type="match status" value="1"/>
</dbReference>
<name>PSBD_CARPA</name>
<organism>
    <name type="scientific">Carica papaya</name>
    <name type="common">Papaya</name>
    <dbReference type="NCBI Taxonomy" id="3649"/>
    <lineage>
        <taxon>Eukaryota</taxon>
        <taxon>Viridiplantae</taxon>
        <taxon>Streptophyta</taxon>
        <taxon>Embryophyta</taxon>
        <taxon>Tracheophyta</taxon>
        <taxon>Spermatophyta</taxon>
        <taxon>Magnoliopsida</taxon>
        <taxon>eudicotyledons</taxon>
        <taxon>Gunneridae</taxon>
        <taxon>Pentapetalae</taxon>
        <taxon>rosids</taxon>
        <taxon>malvids</taxon>
        <taxon>Brassicales</taxon>
        <taxon>Caricaceae</taxon>
        <taxon>Carica</taxon>
    </lineage>
</organism>
<accession>B1A930</accession>
<sequence length="353" mass="39549">MTIALGKFTKDENDLFDIMDDWLRRDRFVFVGWSGLLLFPCAYFAIGGWFTGTTFVTSWYTHGLASSYLEGCNFLTAAVSTPANSLAHSLLLLWGPEAQGDFTRWCQLGGLWTFVALHGAFGLIGFMLRQFELARSVQLRPYNAIAFSGPIAVFVSVFLIYPLGQSGWFFAPSFGVAAIFRFILFFQGFHNWTLNPFHMMGVAGVLGAALLCAIHGATVENTLFEDGDGANTFRAFNPTQAEETYSMVTANRFWSQIFGVAFSNKRWLHFFMLFVPVTGLWMSALGVVGLALNLRAYDFVSQEIRAAEDPEFETFYTKNILLNEGIRAWMAAQDQPHENLIFPEEVLPRGNAL</sequence>
<geneLocation type="chloroplast"/>
<proteinExistence type="inferred from homology"/>
<protein>
    <recommendedName>
        <fullName evidence="2">Photosystem II D2 protein</fullName>
        <shortName evidence="2">PSII D2 protein</shortName>
        <ecNumber evidence="2">1.10.3.9</ecNumber>
    </recommendedName>
    <alternativeName>
        <fullName evidence="2">Photosystem Q(A) protein</fullName>
    </alternativeName>
</protein>
<reference key="1">
    <citation type="journal article" date="2008" name="Nature">
        <title>The draft genome of the transgenic tropical fruit tree papaya (Carica papaya Linnaeus).</title>
        <authorList>
            <person name="Ming R."/>
            <person name="Hou S."/>
            <person name="Feng Y."/>
            <person name="Yu Q."/>
            <person name="Dionne-Laporte A."/>
            <person name="Saw J.H."/>
            <person name="Senin P."/>
            <person name="Wang W."/>
            <person name="Ly B.V."/>
            <person name="Lewis K.L."/>
            <person name="Salzberg S.L."/>
            <person name="Feng L."/>
            <person name="Jones M.R."/>
            <person name="Skelton R.L."/>
            <person name="Murray J.E."/>
            <person name="Chen C."/>
            <person name="Qian W."/>
            <person name="Shen J."/>
            <person name="Du P."/>
            <person name="Eustice M."/>
            <person name="Tong E."/>
            <person name="Tang H."/>
            <person name="Lyons E."/>
            <person name="Paull R.E."/>
            <person name="Michael T.P."/>
            <person name="Wall K."/>
            <person name="Rice D.W."/>
            <person name="Albert H."/>
            <person name="Wang M.L."/>
            <person name="Zhu Y.J."/>
            <person name="Schatz M."/>
            <person name="Nagarajan N."/>
            <person name="Acob R.A."/>
            <person name="Guan P."/>
            <person name="Blas A."/>
            <person name="Wai C.M."/>
            <person name="Ackerman C.M."/>
            <person name="Ren Y."/>
            <person name="Liu C."/>
            <person name="Wang J."/>
            <person name="Wang J."/>
            <person name="Na J.K."/>
            <person name="Shakirov E.V."/>
            <person name="Haas B."/>
            <person name="Thimmapuram J."/>
            <person name="Nelson D."/>
            <person name="Wang X."/>
            <person name="Bowers J.E."/>
            <person name="Gschwend A.R."/>
            <person name="Delcher A.L."/>
            <person name="Singh R."/>
            <person name="Suzuki J.Y."/>
            <person name="Tripathi S."/>
            <person name="Neupane K."/>
            <person name="Wei H."/>
            <person name="Irikura B."/>
            <person name="Paidi M."/>
            <person name="Jiang N."/>
            <person name="Zhang W."/>
            <person name="Presting G."/>
            <person name="Windsor A."/>
            <person name="Navajas-Perez R."/>
            <person name="Torres M.J."/>
            <person name="Feltus F.A."/>
            <person name="Porter B."/>
            <person name="Li Y."/>
            <person name="Burroughs A.M."/>
            <person name="Luo M.C."/>
            <person name="Liu L."/>
            <person name="Christopher D.A."/>
            <person name="Mount S.M."/>
            <person name="Moore P.H."/>
            <person name="Sugimura T."/>
            <person name="Jiang J."/>
            <person name="Schuler M.A."/>
            <person name="Friedman V."/>
            <person name="Mitchell-Olds T."/>
            <person name="Shippen D.E."/>
            <person name="dePamphilis C.W."/>
            <person name="Palmer J.D."/>
            <person name="Freeling M."/>
            <person name="Paterson A.H."/>
            <person name="Gonsalves D."/>
            <person name="Wang L."/>
            <person name="Alam M."/>
        </authorList>
    </citation>
    <scope>NUCLEOTIDE SEQUENCE [LARGE SCALE GENOMIC DNA]</scope>
    <source>
        <strain>cv. SunUp</strain>
    </source>
</reference>
<evidence type="ECO:0000250" key="1">
    <source>
        <dbReference type="UniProtKB" id="P56761"/>
    </source>
</evidence>
<evidence type="ECO:0000255" key="2">
    <source>
        <dbReference type="HAMAP-Rule" id="MF_01383"/>
    </source>
</evidence>
<comment type="function">
    <text evidence="2">Photosystem II (PSII) is a light-driven water:plastoquinone oxidoreductase that uses light energy to abstract electrons from H(2)O, generating O(2) and a proton gradient subsequently used for ATP formation. It consists of a core antenna complex that captures photons, and an electron transfer chain that converts photonic excitation into a charge separation. The D1/D2 (PsbA/PsbD) reaction center heterodimer binds P680, the primary electron donor of PSII as well as several subsequent electron acceptors. D2 is needed for assembly of a stable PSII complex.</text>
</comment>
<comment type="catalytic activity">
    <reaction evidence="2">
        <text>2 a plastoquinone + 4 hnu + 2 H2O = 2 a plastoquinol + O2</text>
        <dbReference type="Rhea" id="RHEA:36359"/>
        <dbReference type="Rhea" id="RHEA-COMP:9561"/>
        <dbReference type="Rhea" id="RHEA-COMP:9562"/>
        <dbReference type="ChEBI" id="CHEBI:15377"/>
        <dbReference type="ChEBI" id="CHEBI:15379"/>
        <dbReference type="ChEBI" id="CHEBI:17757"/>
        <dbReference type="ChEBI" id="CHEBI:30212"/>
        <dbReference type="ChEBI" id="CHEBI:62192"/>
        <dbReference type="EC" id="1.10.3.9"/>
    </reaction>
</comment>
<comment type="cofactor">
    <text evidence="2">The D1/D2 heterodimer binds P680, chlorophylls that are the primary electron donor of PSII, and subsequent electron acceptors. It shares a non-heme iron and each subunit binds pheophytin, quinone, additional chlorophylls, carotenoids and lipids. There is also a Cl(-1) ion associated with D1 and D2, which is required for oxygen evolution. The PSII complex binds additional chlorophylls, carotenoids and specific lipids.</text>
</comment>
<comment type="subunit">
    <text evidence="2">PSII is composed of 1 copy each of membrane proteins PsbA, PsbB, PsbC, PsbD, PsbE, PsbF, PsbH, PsbI, PsbJ, PsbK, PsbL, PsbM, PsbT, PsbX, PsbY, PsbZ, Psb30/Ycf12, at least 3 peripheral proteins of the oxygen-evolving complex and a large number of cofactors. It forms dimeric complexes.</text>
</comment>
<comment type="subcellular location">
    <subcellularLocation>
        <location evidence="2">Plastid</location>
        <location evidence="2">Chloroplast thylakoid membrane</location>
        <topology evidence="2">Multi-pass membrane protein</topology>
    </subcellularLocation>
</comment>
<comment type="miscellaneous">
    <text evidence="2">2 of the reaction center chlorophylls (ChlD1 and ChlD2) are entirely coordinated by water.</text>
</comment>
<comment type="similarity">
    <text evidence="2">Belongs to the reaction center PufL/M/PsbA/D family.</text>
</comment>
<feature type="initiator methionine" description="Removed" evidence="1">
    <location>
        <position position="1"/>
    </location>
</feature>
<feature type="chain" id="PRO_0000359629" description="Photosystem II D2 protein">
    <location>
        <begin position="2"/>
        <end position="353"/>
    </location>
</feature>
<feature type="transmembrane region" description="Helical" evidence="2">
    <location>
        <begin position="41"/>
        <end position="61"/>
    </location>
</feature>
<feature type="transmembrane region" description="Helical" evidence="2">
    <location>
        <begin position="125"/>
        <end position="141"/>
    </location>
</feature>
<feature type="transmembrane region" description="Helical" evidence="2">
    <location>
        <begin position="153"/>
        <end position="166"/>
    </location>
</feature>
<feature type="transmembrane region" description="Helical" evidence="2">
    <location>
        <begin position="208"/>
        <end position="228"/>
    </location>
</feature>
<feature type="transmembrane region" description="Helical" evidence="2">
    <location>
        <begin position="279"/>
        <end position="295"/>
    </location>
</feature>
<feature type="binding site" description="axial binding residue" evidence="2">
    <location>
        <position position="118"/>
    </location>
    <ligand>
        <name>chlorophyll a</name>
        <dbReference type="ChEBI" id="CHEBI:58416"/>
        <label>ChlzD2</label>
    </ligand>
    <ligandPart>
        <name>Mg</name>
        <dbReference type="ChEBI" id="CHEBI:25107"/>
    </ligandPart>
</feature>
<feature type="binding site" evidence="2">
    <location>
        <position position="130"/>
    </location>
    <ligand>
        <name>pheophytin a</name>
        <dbReference type="ChEBI" id="CHEBI:136840"/>
        <label>D2</label>
    </ligand>
</feature>
<feature type="binding site" evidence="2">
    <location>
        <position position="143"/>
    </location>
    <ligand>
        <name>pheophytin a</name>
        <dbReference type="ChEBI" id="CHEBI:136840"/>
        <label>D2</label>
    </ligand>
</feature>
<feature type="binding site" description="axial binding residue" evidence="2">
    <location>
        <position position="198"/>
    </location>
    <ligand>
        <name>chlorophyll a</name>
        <dbReference type="ChEBI" id="CHEBI:58416"/>
        <label>PD2</label>
    </ligand>
    <ligandPart>
        <name>Mg</name>
        <dbReference type="ChEBI" id="CHEBI:25107"/>
    </ligandPart>
</feature>
<feature type="binding site" evidence="2">
    <location>
        <position position="215"/>
    </location>
    <ligand>
        <name>a plastoquinone</name>
        <dbReference type="ChEBI" id="CHEBI:17757"/>
        <label>Q(A)</label>
    </ligand>
</feature>
<feature type="binding site" evidence="2">
    <location>
        <position position="215"/>
    </location>
    <ligand>
        <name>Fe cation</name>
        <dbReference type="ChEBI" id="CHEBI:24875"/>
        <note>ligand shared with heterodimeric partner</note>
    </ligand>
</feature>
<feature type="binding site" evidence="2">
    <location>
        <position position="262"/>
    </location>
    <ligand>
        <name>a plastoquinone</name>
        <dbReference type="ChEBI" id="CHEBI:17757"/>
        <label>Q(A)</label>
    </ligand>
</feature>
<feature type="binding site" evidence="2">
    <location>
        <position position="269"/>
    </location>
    <ligand>
        <name>Fe cation</name>
        <dbReference type="ChEBI" id="CHEBI:24875"/>
        <note>ligand shared with heterodimeric partner</note>
    </ligand>
</feature>
<feature type="modified residue" description="N-acetylthreonine" evidence="1">
    <location>
        <position position="2"/>
    </location>
</feature>
<feature type="modified residue" description="Phosphothreonine" evidence="1">
    <location>
        <position position="2"/>
    </location>
</feature>
<keyword id="KW-0007">Acetylation</keyword>
<keyword id="KW-0148">Chlorophyll</keyword>
<keyword id="KW-0150">Chloroplast</keyword>
<keyword id="KW-0157">Chromophore</keyword>
<keyword id="KW-0249">Electron transport</keyword>
<keyword id="KW-0408">Iron</keyword>
<keyword id="KW-0460">Magnesium</keyword>
<keyword id="KW-0472">Membrane</keyword>
<keyword id="KW-0479">Metal-binding</keyword>
<keyword id="KW-0560">Oxidoreductase</keyword>
<keyword id="KW-0597">Phosphoprotein</keyword>
<keyword id="KW-0602">Photosynthesis</keyword>
<keyword id="KW-0604">Photosystem II</keyword>
<keyword id="KW-0934">Plastid</keyword>
<keyword id="KW-0793">Thylakoid</keyword>
<keyword id="KW-0812">Transmembrane</keyword>
<keyword id="KW-1133">Transmembrane helix</keyword>
<keyword id="KW-0813">Transport</keyword>
<gene>
    <name evidence="2" type="primary">psbD</name>
</gene>